<protein>
    <recommendedName>
        <fullName evidence="1">RNA pyrophosphohydrolase</fullName>
        <ecNumber evidence="1">3.6.1.-</ecNumber>
    </recommendedName>
    <alternativeName>
        <fullName evidence="1">(Di)nucleoside polyphosphate hydrolase</fullName>
    </alternativeName>
</protein>
<accession>A1TTD1</accession>
<evidence type="ECO:0000255" key="1">
    <source>
        <dbReference type="HAMAP-Rule" id="MF_00298"/>
    </source>
</evidence>
<evidence type="ECO:0000256" key="2">
    <source>
        <dbReference type="SAM" id="MobiDB-lite"/>
    </source>
</evidence>
<comment type="function">
    <text evidence="1">Accelerates the degradation of transcripts by removing pyrophosphate from the 5'-end of triphosphorylated RNA, leading to a more labile monophosphorylated state that can stimulate subsequent ribonuclease cleavage.</text>
</comment>
<comment type="cofactor">
    <cofactor evidence="1">
        <name>a divalent metal cation</name>
        <dbReference type="ChEBI" id="CHEBI:60240"/>
    </cofactor>
</comment>
<comment type="similarity">
    <text evidence="1">Belongs to the Nudix hydrolase family. RppH subfamily.</text>
</comment>
<sequence length="226" mass="26390">MLDRDGFRPNVGIILLNQRNQVFWGKRIRTHSWQFPQGGIDRGETPEQAMFRELHEEVGLQPCHVRVVARTRDWLRYEVPDRYIRRDARGHYKGQKQIWFLLQLVGHDWDLNLRATNHPEFDAWRWNDYWVPLDVVVEFKRGVYEMALTELARFLPRNDQRNRYLRSGMRQREGAPEVSLGTTTQLRTTSLLVHPGMELPPGASFDPDPRTGDGDPGMPGIHKPAG</sequence>
<keyword id="KW-0378">Hydrolase</keyword>
<proteinExistence type="inferred from homology"/>
<organism>
    <name type="scientific">Paracidovorax citrulli (strain AAC00-1)</name>
    <name type="common">Acidovorax citrulli</name>
    <dbReference type="NCBI Taxonomy" id="397945"/>
    <lineage>
        <taxon>Bacteria</taxon>
        <taxon>Pseudomonadati</taxon>
        <taxon>Pseudomonadota</taxon>
        <taxon>Betaproteobacteria</taxon>
        <taxon>Burkholderiales</taxon>
        <taxon>Comamonadaceae</taxon>
        <taxon>Paracidovorax</taxon>
    </lineage>
</organism>
<feature type="chain" id="PRO_1000021920" description="RNA pyrophosphohydrolase">
    <location>
        <begin position="1"/>
        <end position="226"/>
    </location>
</feature>
<feature type="domain" description="Nudix hydrolase" evidence="1">
    <location>
        <begin position="6"/>
        <end position="149"/>
    </location>
</feature>
<feature type="region of interest" description="Disordered" evidence="2">
    <location>
        <begin position="197"/>
        <end position="226"/>
    </location>
</feature>
<feature type="short sequence motif" description="Nudix box">
    <location>
        <begin position="38"/>
        <end position="59"/>
    </location>
</feature>
<gene>
    <name evidence="1" type="primary">rppH</name>
    <name evidence="1" type="synonym">nudH</name>
    <name type="ordered locus">Aave_3671</name>
</gene>
<reference key="1">
    <citation type="submission" date="2006-12" db="EMBL/GenBank/DDBJ databases">
        <title>Complete sequence of Acidovorax avenae subsp. citrulli AAC00-1.</title>
        <authorList>
            <person name="Copeland A."/>
            <person name="Lucas S."/>
            <person name="Lapidus A."/>
            <person name="Barry K."/>
            <person name="Detter J.C."/>
            <person name="Glavina del Rio T."/>
            <person name="Dalin E."/>
            <person name="Tice H."/>
            <person name="Pitluck S."/>
            <person name="Kiss H."/>
            <person name="Brettin T."/>
            <person name="Bruce D."/>
            <person name="Han C."/>
            <person name="Tapia R."/>
            <person name="Gilna P."/>
            <person name="Schmutz J."/>
            <person name="Larimer F."/>
            <person name="Land M."/>
            <person name="Hauser L."/>
            <person name="Kyrpides N."/>
            <person name="Kim E."/>
            <person name="Stahl D."/>
            <person name="Richardson P."/>
        </authorList>
    </citation>
    <scope>NUCLEOTIDE SEQUENCE [LARGE SCALE GENOMIC DNA]</scope>
    <source>
        <strain>AAC00-1</strain>
    </source>
</reference>
<name>RPPH_PARC0</name>
<dbReference type="EC" id="3.6.1.-" evidence="1"/>
<dbReference type="EMBL" id="CP000512">
    <property type="protein sequence ID" value="ABM34219.1"/>
    <property type="molecule type" value="Genomic_DNA"/>
</dbReference>
<dbReference type="RefSeq" id="WP_011796713.1">
    <property type="nucleotide sequence ID" value="NC_008752.1"/>
</dbReference>
<dbReference type="SMR" id="A1TTD1"/>
<dbReference type="STRING" id="397945.Aave_3671"/>
<dbReference type="GeneID" id="79791439"/>
<dbReference type="KEGG" id="aav:Aave_3671"/>
<dbReference type="eggNOG" id="COG0494">
    <property type="taxonomic scope" value="Bacteria"/>
</dbReference>
<dbReference type="HOGENOM" id="CLU_087195_1_1_4"/>
<dbReference type="OrthoDB" id="9816040at2"/>
<dbReference type="Proteomes" id="UP000002596">
    <property type="component" value="Chromosome"/>
</dbReference>
<dbReference type="GO" id="GO:0034432">
    <property type="term" value="F:bis(5'-adenosyl)-pentaphosphatase activity"/>
    <property type="evidence" value="ECO:0007669"/>
    <property type="project" value="TreeGrafter"/>
</dbReference>
<dbReference type="GO" id="GO:0008893">
    <property type="term" value="F:guanosine-3',5'-bis(diphosphate) 3'-diphosphatase activity"/>
    <property type="evidence" value="ECO:0007669"/>
    <property type="project" value="TreeGrafter"/>
</dbReference>
<dbReference type="GO" id="GO:0006753">
    <property type="term" value="P:nucleoside phosphate metabolic process"/>
    <property type="evidence" value="ECO:0007669"/>
    <property type="project" value="TreeGrafter"/>
</dbReference>
<dbReference type="GO" id="GO:0019693">
    <property type="term" value="P:ribose phosphate metabolic process"/>
    <property type="evidence" value="ECO:0007669"/>
    <property type="project" value="TreeGrafter"/>
</dbReference>
<dbReference type="CDD" id="cd03671">
    <property type="entry name" value="NUDIX_Ap4A_hydrolase_plant_like"/>
    <property type="match status" value="1"/>
</dbReference>
<dbReference type="Gene3D" id="3.90.79.10">
    <property type="entry name" value="Nucleoside Triphosphate Pyrophosphohydrolase"/>
    <property type="match status" value="1"/>
</dbReference>
<dbReference type="HAMAP" id="MF_00298">
    <property type="entry name" value="Nudix_RppH"/>
    <property type="match status" value="1"/>
</dbReference>
<dbReference type="InterPro" id="IPR020476">
    <property type="entry name" value="Nudix_hydrolase"/>
</dbReference>
<dbReference type="InterPro" id="IPR015797">
    <property type="entry name" value="NUDIX_hydrolase-like_dom_sf"/>
</dbReference>
<dbReference type="InterPro" id="IPR020084">
    <property type="entry name" value="NUDIX_hydrolase_CS"/>
</dbReference>
<dbReference type="InterPro" id="IPR000086">
    <property type="entry name" value="NUDIX_hydrolase_dom"/>
</dbReference>
<dbReference type="InterPro" id="IPR022927">
    <property type="entry name" value="RppH"/>
</dbReference>
<dbReference type="NCBIfam" id="NF001935">
    <property type="entry name" value="PRK00714.1-2"/>
    <property type="match status" value="1"/>
</dbReference>
<dbReference type="NCBIfam" id="NF001937">
    <property type="entry name" value="PRK00714.1-4"/>
    <property type="match status" value="1"/>
</dbReference>
<dbReference type="NCBIfam" id="NF001938">
    <property type="entry name" value="PRK00714.1-5"/>
    <property type="match status" value="1"/>
</dbReference>
<dbReference type="PANTHER" id="PTHR11839:SF22">
    <property type="entry name" value="NUDIX HYDROLASE 26, CHLOROPLASTIC"/>
    <property type="match status" value="1"/>
</dbReference>
<dbReference type="PANTHER" id="PTHR11839">
    <property type="entry name" value="UDP/ADP-SUGAR PYROPHOSPHATASE"/>
    <property type="match status" value="1"/>
</dbReference>
<dbReference type="Pfam" id="PF00293">
    <property type="entry name" value="NUDIX"/>
    <property type="match status" value="1"/>
</dbReference>
<dbReference type="PRINTS" id="PR00502">
    <property type="entry name" value="NUDIXFAMILY"/>
</dbReference>
<dbReference type="SUPFAM" id="SSF55811">
    <property type="entry name" value="Nudix"/>
    <property type="match status" value="1"/>
</dbReference>
<dbReference type="PROSITE" id="PS51462">
    <property type="entry name" value="NUDIX"/>
    <property type="match status" value="1"/>
</dbReference>
<dbReference type="PROSITE" id="PS00893">
    <property type="entry name" value="NUDIX_BOX"/>
    <property type="match status" value="1"/>
</dbReference>